<accession>O65731</accession>
<feature type="chain" id="PRO_0000124536" description="Small ribosomal subunit protein uS7">
    <location>
        <begin position="1" status="less than"/>
        <end position="197"/>
    </location>
</feature>
<feature type="non-terminal residue">
    <location>
        <position position="1"/>
    </location>
</feature>
<keyword id="KW-1185">Reference proteome</keyword>
<keyword id="KW-0687">Ribonucleoprotein</keyword>
<keyword id="KW-0689">Ribosomal protein</keyword>
<comment type="similarity">
    <text evidence="1">Belongs to the universal ribosomal protein uS7 family.</text>
</comment>
<gene>
    <name type="primary">RPS5</name>
</gene>
<dbReference type="EMBL" id="AJ005346">
    <property type="protein sequence ID" value="CAA06491.1"/>
    <property type="molecule type" value="mRNA"/>
</dbReference>
<dbReference type="SMR" id="O65731"/>
<dbReference type="STRING" id="3827.O65731"/>
<dbReference type="PaxDb" id="3827-XP_004486053.1"/>
<dbReference type="eggNOG" id="KOG3291">
    <property type="taxonomic scope" value="Eukaryota"/>
</dbReference>
<dbReference type="Proteomes" id="UP000087171">
    <property type="component" value="Unplaced"/>
</dbReference>
<dbReference type="GO" id="GO:0015935">
    <property type="term" value="C:small ribosomal subunit"/>
    <property type="evidence" value="ECO:0007669"/>
    <property type="project" value="InterPro"/>
</dbReference>
<dbReference type="GO" id="GO:0003723">
    <property type="term" value="F:RNA binding"/>
    <property type="evidence" value="ECO:0007669"/>
    <property type="project" value="InterPro"/>
</dbReference>
<dbReference type="GO" id="GO:0003735">
    <property type="term" value="F:structural constituent of ribosome"/>
    <property type="evidence" value="ECO:0007669"/>
    <property type="project" value="InterPro"/>
</dbReference>
<dbReference type="GO" id="GO:0006412">
    <property type="term" value="P:translation"/>
    <property type="evidence" value="ECO:0007669"/>
    <property type="project" value="InterPro"/>
</dbReference>
<dbReference type="CDD" id="cd14867">
    <property type="entry name" value="uS7_Eukaryote"/>
    <property type="match status" value="1"/>
</dbReference>
<dbReference type="FunFam" id="1.10.455.10:FF:000002">
    <property type="entry name" value="40S ribosomal protein S5"/>
    <property type="match status" value="1"/>
</dbReference>
<dbReference type="Gene3D" id="1.10.455.10">
    <property type="entry name" value="Ribosomal protein S7 domain"/>
    <property type="match status" value="1"/>
</dbReference>
<dbReference type="InterPro" id="IPR000235">
    <property type="entry name" value="Ribosomal_uS7"/>
</dbReference>
<dbReference type="InterPro" id="IPR020606">
    <property type="entry name" value="Ribosomal_uS7_CS"/>
</dbReference>
<dbReference type="InterPro" id="IPR023798">
    <property type="entry name" value="Ribosomal_uS7_dom"/>
</dbReference>
<dbReference type="InterPro" id="IPR036823">
    <property type="entry name" value="Ribosomal_uS7_dom_sf"/>
</dbReference>
<dbReference type="InterPro" id="IPR005716">
    <property type="entry name" value="Ribosomal_uS7_euk/arc"/>
</dbReference>
<dbReference type="NCBIfam" id="NF003106">
    <property type="entry name" value="PRK04027.1"/>
    <property type="match status" value="1"/>
</dbReference>
<dbReference type="NCBIfam" id="TIGR01028">
    <property type="entry name" value="uS7_euk_arch"/>
    <property type="match status" value="1"/>
</dbReference>
<dbReference type="PANTHER" id="PTHR11205">
    <property type="entry name" value="RIBOSOMAL PROTEIN S7"/>
    <property type="match status" value="1"/>
</dbReference>
<dbReference type="Pfam" id="PF00177">
    <property type="entry name" value="Ribosomal_S7"/>
    <property type="match status" value="1"/>
</dbReference>
<dbReference type="PIRSF" id="PIRSF002122">
    <property type="entry name" value="RPS7p_RPS7a_RPS5e_RPS7o"/>
    <property type="match status" value="1"/>
</dbReference>
<dbReference type="SUPFAM" id="SSF47973">
    <property type="entry name" value="Ribosomal protein S7"/>
    <property type="match status" value="1"/>
</dbReference>
<dbReference type="PROSITE" id="PS00052">
    <property type="entry name" value="RIBOSOMAL_S7"/>
    <property type="match status" value="1"/>
</dbReference>
<name>RS5_CICAR</name>
<sequence length="197" mass="22018">RSDPTQIEVKLFNRWSFDDVQLSDVSLIDYIGVVPSKHATYVPHTAGRYSVKRFRKAQCPIVERLTNSLMMHGRNNGKKLMAVRIIKHAMEIIHLLTDQNPIQVIVDAVVNSGPREDATRIGSAGVVRRQAVDISPLRRVNQAIYLLTTGAREAAFRNIKSIAECLADELINAAKGSSNSYAIKKKDEIERVAKANR</sequence>
<organism>
    <name type="scientific">Cicer arietinum</name>
    <name type="common">Chickpea</name>
    <name type="synonym">Garbanzo</name>
    <dbReference type="NCBI Taxonomy" id="3827"/>
    <lineage>
        <taxon>Eukaryota</taxon>
        <taxon>Viridiplantae</taxon>
        <taxon>Streptophyta</taxon>
        <taxon>Embryophyta</taxon>
        <taxon>Tracheophyta</taxon>
        <taxon>Spermatophyta</taxon>
        <taxon>Magnoliopsida</taxon>
        <taxon>eudicotyledons</taxon>
        <taxon>Gunneridae</taxon>
        <taxon>Pentapetalae</taxon>
        <taxon>rosids</taxon>
        <taxon>fabids</taxon>
        <taxon>Fabales</taxon>
        <taxon>Fabaceae</taxon>
        <taxon>Papilionoideae</taxon>
        <taxon>50 kb inversion clade</taxon>
        <taxon>NPAAA clade</taxon>
        <taxon>Hologalegina</taxon>
        <taxon>IRL clade</taxon>
        <taxon>Cicereae</taxon>
        <taxon>Cicer</taxon>
    </lineage>
</organism>
<reference key="1">
    <citation type="submission" date="1998-04" db="EMBL/GenBank/DDBJ databases">
        <title>cDNA expressed in chickpea epicotyls.</title>
        <authorList>
            <person name="Dopico B."/>
            <person name="Esteban R."/>
            <person name="Labrador E."/>
        </authorList>
    </citation>
    <scope>NUCLEOTIDE SEQUENCE [MRNA]</scope>
    <source>
        <strain>cv. Castellana</strain>
        <tissue>Etiolated epicotyl</tissue>
    </source>
</reference>
<protein>
    <recommendedName>
        <fullName evidence="1">Small ribosomal subunit protein uS7</fullName>
    </recommendedName>
    <alternativeName>
        <fullName>40S ribosomal protein S5</fullName>
    </alternativeName>
</protein>
<evidence type="ECO:0000305" key="1"/>
<proteinExistence type="evidence at transcript level"/>